<evidence type="ECO:0000255" key="1">
    <source>
        <dbReference type="HAMAP-Rule" id="MF_01007"/>
    </source>
</evidence>
<evidence type="ECO:0000256" key="2">
    <source>
        <dbReference type="SAM" id="MobiDB-lite"/>
    </source>
</evidence>
<evidence type="ECO:0000305" key="3"/>
<sequence>MKFKHKSVLLHETIDNLNPKDGGLYVDATFGGGGHARYLLSKLNKGTVIGFDQDEYAISMAKESFAKELQVGAEPRLMLVHDNFCHLKENLVELGISDGIDGIYYDLGVSSPQFDQPERGFSYRFDARLDMRMDQSQELDAYTIVNTWSQKELSDVLYKYGDEKFSRQIARKIVDRRKEKPIVTTFDLVDVIKDAIPAYARRSGGHPAKKSFQAIRVAVNDELGVLQESLEEAIKLLKPGGRISVITFQSHEDKIVKKIFKKYSEVEIPRGMPMVPADSKPTLRLISRKPIMASSDELEENNRSHSAKLRVAEKL</sequence>
<comment type="function">
    <text evidence="1">Specifically methylates the N4 position of cytidine in position 1402 (C1402) of 16S rRNA.</text>
</comment>
<comment type="catalytic activity">
    <reaction evidence="1">
        <text>cytidine(1402) in 16S rRNA + S-adenosyl-L-methionine = N(4)-methylcytidine(1402) in 16S rRNA + S-adenosyl-L-homocysteine + H(+)</text>
        <dbReference type="Rhea" id="RHEA:42928"/>
        <dbReference type="Rhea" id="RHEA-COMP:10286"/>
        <dbReference type="Rhea" id="RHEA-COMP:10287"/>
        <dbReference type="ChEBI" id="CHEBI:15378"/>
        <dbReference type="ChEBI" id="CHEBI:57856"/>
        <dbReference type="ChEBI" id="CHEBI:59789"/>
        <dbReference type="ChEBI" id="CHEBI:74506"/>
        <dbReference type="ChEBI" id="CHEBI:82748"/>
        <dbReference type="EC" id="2.1.1.199"/>
    </reaction>
</comment>
<comment type="subcellular location">
    <subcellularLocation>
        <location evidence="1">Cytoplasm</location>
    </subcellularLocation>
</comment>
<comment type="similarity">
    <text evidence="1">Belongs to the methyltransferase superfamily. RsmH family.</text>
</comment>
<comment type="sequence caution" evidence="3">
    <conflict type="erroneous initiation">
        <sequence resource="EMBL-CDS" id="AAS08788"/>
    </conflict>
</comment>
<name>RSMH_LACJO</name>
<organism>
    <name type="scientific">Lactobacillus johnsonii (strain CNCM I-12250 / La1 / NCC 533)</name>
    <dbReference type="NCBI Taxonomy" id="257314"/>
    <lineage>
        <taxon>Bacteria</taxon>
        <taxon>Bacillati</taxon>
        <taxon>Bacillota</taxon>
        <taxon>Bacilli</taxon>
        <taxon>Lactobacillales</taxon>
        <taxon>Lactobacillaceae</taxon>
        <taxon>Lactobacillus</taxon>
    </lineage>
</organism>
<keyword id="KW-0963">Cytoplasm</keyword>
<keyword id="KW-0489">Methyltransferase</keyword>
<keyword id="KW-0698">rRNA processing</keyword>
<keyword id="KW-0949">S-adenosyl-L-methionine</keyword>
<keyword id="KW-0808">Transferase</keyword>
<gene>
    <name evidence="1" type="primary">rsmH</name>
    <name type="synonym">mraW</name>
    <name type="ordered locus">LJ_0967</name>
</gene>
<accession>P62471</accession>
<reference key="1">
    <citation type="journal article" date="2004" name="Proc. Natl. Acad. Sci. U.S.A.">
        <title>The genome sequence of the probiotic intestinal bacterium Lactobacillus johnsonii NCC 533.</title>
        <authorList>
            <person name="Pridmore R.D."/>
            <person name="Berger B."/>
            <person name="Desiere F."/>
            <person name="Vilanova D."/>
            <person name="Barretto C."/>
            <person name="Pittet A.-C."/>
            <person name="Zwahlen M.-C."/>
            <person name="Rouvet M."/>
            <person name="Altermann E."/>
            <person name="Barrangou R."/>
            <person name="Mollet B."/>
            <person name="Mercenier A."/>
            <person name="Klaenhammer T."/>
            <person name="Arigoni F."/>
            <person name="Schell M.A."/>
        </authorList>
    </citation>
    <scope>NUCLEOTIDE SEQUENCE [LARGE SCALE GENOMIC DNA]</scope>
    <source>
        <strain>CNCM I-1225 / La1 / NCC 533</strain>
    </source>
</reference>
<protein>
    <recommendedName>
        <fullName evidence="1">Ribosomal RNA small subunit methyltransferase H</fullName>
        <ecNumber evidence="1">2.1.1.199</ecNumber>
    </recommendedName>
    <alternativeName>
        <fullName evidence="1">16S rRNA m(4)C1402 methyltransferase</fullName>
    </alternativeName>
    <alternativeName>
        <fullName evidence="1">rRNA (cytosine-N(4)-)-methyltransferase RsmH</fullName>
    </alternativeName>
</protein>
<feature type="chain" id="PRO_0000108642" description="Ribosomal RNA small subunit methyltransferase H">
    <location>
        <begin position="1"/>
        <end position="315"/>
    </location>
</feature>
<feature type="region of interest" description="Disordered" evidence="2">
    <location>
        <begin position="294"/>
        <end position="315"/>
    </location>
</feature>
<feature type="binding site" evidence="1">
    <location>
        <begin position="33"/>
        <end position="35"/>
    </location>
    <ligand>
        <name>S-adenosyl-L-methionine</name>
        <dbReference type="ChEBI" id="CHEBI:59789"/>
    </ligand>
</feature>
<feature type="binding site" evidence="1">
    <location>
        <position position="52"/>
    </location>
    <ligand>
        <name>S-adenosyl-L-methionine</name>
        <dbReference type="ChEBI" id="CHEBI:59789"/>
    </ligand>
</feature>
<feature type="binding site" evidence="1">
    <location>
        <position position="84"/>
    </location>
    <ligand>
        <name>S-adenosyl-L-methionine</name>
        <dbReference type="ChEBI" id="CHEBI:59789"/>
    </ligand>
</feature>
<feature type="binding site" evidence="1">
    <location>
        <position position="106"/>
    </location>
    <ligand>
        <name>S-adenosyl-L-methionine</name>
        <dbReference type="ChEBI" id="CHEBI:59789"/>
    </ligand>
</feature>
<feature type="binding site" evidence="1">
    <location>
        <position position="113"/>
    </location>
    <ligand>
        <name>S-adenosyl-L-methionine</name>
        <dbReference type="ChEBI" id="CHEBI:59789"/>
    </ligand>
</feature>
<proteinExistence type="inferred from homology"/>
<dbReference type="EC" id="2.1.1.199" evidence="1"/>
<dbReference type="EMBL" id="AE017198">
    <property type="protein sequence ID" value="AAS08788.1"/>
    <property type="status" value="ALT_INIT"/>
    <property type="molecule type" value="Genomic_DNA"/>
</dbReference>
<dbReference type="RefSeq" id="WP_044496740.1">
    <property type="nucleotide sequence ID" value="NC_005362.1"/>
</dbReference>
<dbReference type="SMR" id="P62471"/>
<dbReference type="KEGG" id="ljo:LJ_0967"/>
<dbReference type="PATRIC" id="fig|257314.6.peg.826"/>
<dbReference type="eggNOG" id="COG0275">
    <property type="taxonomic scope" value="Bacteria"/>
</dbReference>
<dbReference type="HOGENOM" id="CLU_038422_2_0_9"/>
<dbReference type="Proteomes" id="UP000000581">
    <property type="component" value="Chromosome"/>
</dbReference>
<dbReference type="GO" id="GO:0005737">
    <property type="term" value="C:cytoplasm"/>
    <property type="evidence" value="ECO:0007669"/>
    <property type="project" value="UniProtKB-SubCell"/>
</dbReference>
<dbReference type="GO" id="GO:0071424">
    <property type="term" value="F:rRNA (cytosine-N4-)-methyltransferase activity"/>
    <property type="evidence" value="ECO:0007669"/>
    <property type="project" value="UniProtKB-UniRule"/>
</dbReference>
<dbReference type="GO" id="GO:0070475">
    <property type="term" value="P:rRNA base methylation"/>
    <property type="evidence" value="ECO:0007669"/>
    <property type="project" value="UniProtKB-UniRule"/>
</dbReference>
<dbReference type="FunFam" id="1.10.150.170:FF:000001">
    <property type="entry name" value="Ribosomal RNA small subunit methyltransferase H"/>
    <property type="match status" value="1"/>
</dbReference>
<dbReference type="Gene3D" id="1.10.150.170">
    <property type="entry name" value="Putative methyltransferase TM0872, insert domain"/>
    <property type="match status" value="1"/>
</dbReference>
<dbReference type="Gene3D" id="3.40.50.150">
    <property type="entry name" value="Vaccinia Virus protein VP39"/>
    <property type="match status" value="1"/>
</dbReference>
<dbReference type="HAMAP" id="MF_01007">
    <property type="entry name" value="16SrRNA_methyltr_H"/>
    <property type="match status" value="1"/>
</dbReference>
<dbReference type="InterPro" id="IPR002903">
    <property type="entry name" value="RsmH"/>
</dbReference>
<dbReference type="InterPro" id="IPR023397">
    <property type="entry name" value="SAM-dep_MeTrfase_MraW_recog"/>
</dbReference>
<dbReference type="InterPro" id="IPR029063">
    <property type="entry name" value="SAM-dependent_MTases_sf"/>
</dbReference>
<dbReference type="NCBIfam" id="TIGR00006">
    <property type="entry name" value="16S rRNA (cytosine(1402)-N(4))-methyltransferase RsmH"/>
    <property type="match status" value="1"/>
</dbReference>
<dbReference type="PANTHER" id="PTHR11265:SF0">
    <property type="entry name" value="12S RRNA N4-METHYLCYTIDINE METHYLTRANSFERASE"/>
    <property type="match status" value="1"/>
</dbReference>
<dbReference type="PANTHER" id="PTHR11265">
    <property type="entry name" value="S-ADENOSYL-METHYLTRANSFERASE MRAW"/>
    <property type="match status" value="1"/>
</dbReference>
<dbReference type="Pfam" id="PF01795">
    <property type="entry name" value="Methyltransf_5"/>
    <property type="match status" value="1"/>
</dbReference>
<dbReference type="PIRSF" id="PIRSF004486">
    <property type="entry name" value="MraW"/>
    <property type="match status" value="1"/>
</dbReference>
<dbReference type="SUPFAM" id="SSF81799">
    <property type="entry name" value="Putative methyltransferase TM0872, insert domain"/>
    <property type="match status" value="1"/>
</dbReference>
<dbReference type="SUPFAM" id="SSF53335">
    <property type="entry name" value="S-adenosyl-L-methionine-dependent methyltransferases"/>
    <property type="match status" value="1"/>
</dbReference>